<accession>O51395</accession>
<reference key="1">
    <citation type="journal article" date="1997" name="Nature">
        <title>Genomic sequence of a Lyme disease spirochaete, Borrelia burgdorferi.</title>
        <authorList>
            <person name="Fraser C.M."/>
            <person name="Casjens S."/>
            <person name="Huang W.M."/>
            <person name="Sutton G.G."/>
            <person name="Clayton R.A."/>
            <person name="Lathigra R."/>
            <person name="White O."/>
            <person name="Ketchum K.A."/>
            <person name="Dodson R.J."/>
            <person name="Hickey E.K."/>
            <person name="Gwinn M.L."/>
            <person name="Dougherty B.A."/>
            <person name="Tomb J.-F."/>
            <person name="Fleischmann R.D."/>
            <person name="Richardson D.L."/>
            <person name="Peterson J.D."/>
            <person name="Kerlavage A.R."/>
            <person name="Quackenbush J."/>
            <person name="Salzberg S.L."/>
            <person name="Hanson M."/>
            <person name="van Vugt R."/>
            <person name="Palmer N."/>
            <person name="Adams M.D."/>
            <person name="Gocayne J.D."/>
            <person name="Weidman J.F."/>
            <person name="Utterback T.R."/>
            <person name="Watthey L."/>
            <person name="McDonald L.A."/>
            <person name="Artiach P."/>
            <person name="Bowman C."/>
            <person name="Garland S.A."/>
            <person name="Fujii C."/>
            <person name="Cotton M.D."/>
            <person name="Horst K."/>
            <person name="Roberts K.M."/>
            <person name="Hatch B."/>
            <person name="Smith H.O."/>
            <person name="Venter J.C."/>
        </authorList>
    </citation>
    <scope>NUCLEOTIDE SEQUENCE [LARGE SCALE GENOMIC DNA]</scope>
    <source>
        <strain>ATCC 35210 / DSM 4680 / CIP 102532 / B31</strain>
    </source>
</reference>
<comment type="function">
    <text evidence="1">Involved in chromosome partition. Localize to both poles of the predivisional cell following completion of DNA replication. Binds to the DNA origin of replication (By similarity).</text>
</comment>
<comment type="similarity">
    <text evidence="2">Belongs to the ParB family.</text>
</comment>
<dbReference type="EMBL" id="AE000783">
    <property type="protein sequence ID" value="AAC66804.1"/>
    <property type="molecule type" value="Genomic_DNA"/>
</dbReference>
<dbReference type="PIR" id="A70154">
    <property type="entry name" value="A70154"/>
</dbReference>
<dbReference type="RefSeq" id="NP_212568.1">
    <property type="nucleotide sequence ID" value="NC_001318.1"/>
</dbReference>
<dbReference type="RefSeq" id="WP_002657907.1">
    <property type="nucleotide sequence ID" value="NC_001318.1"/>
</dbReference>
<dbReference type="SMR" id="O51395"/>
<dbReference type="STRING" id="224326.BB_0434"/>
<dbReference type="PaxDb" id="224326-BB_0434"/>
<dbReference type="EnsemblBacteria" id="AAC66804">
    <property type="protein sequence ID" value="AAC66804"/>
    <property type="gene ID" value="BB_0434"/>
</dbReference>
<dbReference type="KEGG" id="bbu:BB_0434"/>
<dbReference type="PATRIC" id="fig|224326.49.peg.825"/>
<dbReference type="HOGENOM" id="CLU_023853_0_0_12"/>
<dbReference type="OrthoDB" id="9802051at2"/>
<dbReference type="Proteomes" id="UP000001807">
    <property type="component" value="Chromosome"/>
</dbReference>
<dbReference type="GO" id="GO:0005694">
    <property type="term" value="C:chromosome"/>
    <property type="evidence" value="ECO:0007669"/>
    <property type="project" value="TreeGrafter"/>
</dbReference>
<dbReference type="GO" id="GO:0003677">
    <property type="term" value="F:DNA binding"/>
    <property type="evidence" value="ECO:0007669"/>
    <property type="project" value="UniProtKB-KW"/>
</dbReference>
<dbReference type="GO" id="GO:0007059">
    <property type="term" value="P:chromosome segregation"/>
    <property type="evidence" value="ECO:0007669"/>
    <property type="project" value="UniProtKB-KW"/>
</dbReference>
<dbReference type="GO" id="GO:0045881">
    <property type="term" value="P:positive regulation of sporulation resulting in formation of a cellular spore"/>
    <property type="evidence" value="ECO:0007669"/>
    <property type="project" value="TreeGrafter"/>
</dbReference>
<dbReference type="CDD" id="cd00093">
    <property type="entry name" value="HTH_XRE"/>
    <property type="match status" value="1"/>
</dbReference>
<dbReference type="FunFam" id="1.10.10.2830:FF:000001">
    <property type="entry name" value="Chromosome partitioning protein ParB"/>
    <property type="match status" value="1"/>
</dbReference>
<dbReference type="FunFam" id="3.90.1530.30:FF:000001">
    <property type="entry name" value="Chromosome partitioning protein ParB"/>
    <property type="match status" value="1"/>
</dbReference>
<dbReference type="Gene3D" id="1.10.10.2830">
    <property type="match status" value="1"/>
</dbReference>
<dbReference type="Gene3D" id="3.90.1530.30">
    <property type="match status" value="1"/>
</dbReference>
<dbReference type="InterPro" id="IPR050336">
    <property type="entry name" value="Chromosome_partition/occlusion"/>
</dbReference>
<dbReference type="InterPro" id="IPR001387">
    <property type="entry name" value="Cro/C1-type_HTH"/>
</dbReference>
<dbReference type="InterPro" id="IPR041468">
    <property type="entry name" value="HTH_ParB/Spo0J"/>
</dbReference>
<dbReference type="InterPro" id="IPR004437">
    <property type="entry name" value="ParB/RepB/Spo0J"/>
</dbReference>
<dbReference type="InterPro" id="IPR003115">
    <property type="entry name" value="ParB/Sulfiredoxin_dom"/>
</dbReference>
<dbReference type="InterPro" id="IPR036086">
    <property type="entry name" value="ParB/Sulfiredoxin_sf"/>
</dbReference>
<dbReference type="NCBIfam" id="TIGR00180">
    <property type="entry name" value="parB_part"/>
    <property type="match status" value="1"/>
</dbReference>
<dbReference type="PANTHER" id="PTHR33375">
    <property type="entry name" value="CHROMOSOME-PARTITIONING PROTEIN PARB-RELATED"/>
    <property type="match status" value="1"/>
</dbReference>
<dbReference type="PANTHER" id="PTHR33375:SF1">
    <property type="entry name" value="CHROMOSOME-PARTITIONING PROTEIN PARB-RELATED"/>
    <property type="match status" value="1"/>
</dbReference>
<dbReference type="Pfam" id="PF17762">
    <property type="entry name" value="HTH_ParB"/>
    <property type="match status" value="1"/>
</dbReference>
<dbReference type="Pfam" id="PF02195">
    <property type="entry name" value="ParBc"/>
    <property type="match status" value="1"/>
</dbReference>
<dbReference type="SMART" id="SM00470">
    <property type="entry name" value="ParB"/>
    <property type="match status" value="1"/>
</dbReference>
<dbReference type="SUPFAM" id="SSF109709">
    <property type="entry name" value="KorB DNA-binding domain-like"/>
    <property type="match status" value="1"/>
</dbReference>
<dbReference type="SUPFAM" id="SSF110849">
    <property type="entry name" value="ParB/Sulfiredoxin"/>
    <property type="match status" value="1"/>
</dbReference>
<protein>
    <recommendedName>
        <fullName>Probable chromosome-partitioning protein ParB</fullName>
    </recommendedName>
</protein>
<proteinExistence type="inferred from homology"/>
<sequence length="260" mass="30340">MDGVFKMIDIHLLDIDNDQPRKSVSLVELEELSISIKENGILQPLIVCKANDRYKIIVGERRFRAAKLIQLTNIPVIEVDIKESCKDFMPLVENIQRENFTPVEEAYAYKNIMNKYSLTQKDLSEKIGKSRTYISNLVRILDLEQEILNAIHRKEISFGHAKVILSLKDRQDRYNLYLIILKKKFSVRDAEKYVKNFSKSIVKKRELEQDPFLNNIKEFLFDKIQTKIDIKGNQNKGKIEIEYFTAGDLKRIVSLFGHSS</sequence>
<keyword id="KW-0159">Chromosome partition</keyword>
<keyword id="KW-0238">DNA-binding</keyword>
<keyword id="KW-1185">Reference proteome</keyword>
<feature type="chain" id="PRO_0000178674" description="Probable chromosome-partitioning protein ParB">
    <location>
        <begin position="1"/>
        <end position="260"/>
    </location>
</feature>
<organism>
    <name type="scientific">Borreliella burgdorferi (strain ATCC 35210 / DSM 4680 / CIP 102532 / B31)</name>
    <name type="common">Borrelia burgdorferi</name>
    <dbReference type="NCBI Taxonomy" id="224326"/>
    <lineage>
        <taxon>Bacteria</taxon>
        <taxon>Pseudomonadati</taxon>
        <taxon>Spirochaetota</taxon>
        <taxon>Spirochaetia</taxon>
        <taxon>Spirochaetales</taxon>
        <taxon>Borreliaceae</taxon>
        <taxon>Borreliella</taxon>
    </lineage>
</organism>
<evidence type="ECO:0000250" key="1"/>
<evidence type="ECO:0000305" key="2"/>
<name>PARB_BORBU</name>
<gene>
    <name type="primary">parB</name>
    <name type="ordered locus">BB_0434</name>
</gene>